<sequence>MARDVLTLSRHVLQQFSGFTPEAQDFSALMNRIALAGKMIARRLSQAGLIEGTLGVTGSVNVQGEEQQRMDDYANRAFIRALEQTGLVCRLVSEELKTPARLPENCSLSRLALLIDPLDGSSNIDANLSVGSIFSVLHPLEDRPEADNQDLLQPGRRQLAAGYILYGPSTQLVYSVGKGVHSFTLDPSLGEFILSKSDLRIPERGSVYSLNEGYFCQWSEGIQNYVRYVHRRDGYTARYSGALVADFHRILLQGGVYLYPGTRQKPEGKLRLMYEANPLAFLAEQAGGVATTGTEAILDIVPQSLHQRVPLIIGSRKNVEEVLRCLEGSLTP</sequence>
<gene>
    <name evidence="1" type="primary">fbp</name>
    <name type="ordered locus">CYA_1698</name>
</gene>
<comment type="catalytic activity">
    <reaction evidence="1">
        <text>beta-D-fructose 1,6-bisphosphate + H2O = beta-D-fructose 6-phosphate + phosphate</text>
        <dbReference type="Rhea" id="RHEA:11064"/>
        <dbReference type="ChEBI" id="CHEBI:15377"/>
        <dbReference type="ChEBI" id="CHEBI:32966"/>
        <dbReference type="ChEBI" id="CHEBI:43474"/>
        <dbReference type="ChEBI" id="CHEBI:57634"/>
        <dbReference type="EC" id="3.1.3.11"/>
    </reaction>
</comment>
<comment type="cofactor">
    <cofactor evidence="1">
        <name>Mg(2+)</name>
        <dbReference type="ChEBI" id="CHEBI:18420"/>
    </cofactor>
    <text evidence="1">Binds 2 magnesium ions per subunit.</text>
</comment>
<comment type="pathway">
    <text evidence="1">Carbohydrate biosynthesis; Calvin cycle.</text>
</comment>
<comment type="subunit">
    <text evidence="1">Homotetramer.</text>
</comment>
<comment type="subcellular location">
    <subcellularLocation>
        <location evidence="1">Cytoplasm</location>
    </subcellularLocation>
</comment>
<comment type="similarity">
    <text evidence="1">Belongs to the FBPase class 1 family.</text>
</comment>
<dbReference type="EC" id="3.1.3.11" evidence="1"/>
<dbReference type="EMBL" id="CP000239">
    <property type="protein sequence ID" value="ABC99854.1"/>
    <property type="molecule type" value="Genomic_DNA"/>
</dbReference>
<dbReference type="SMR" id="Q2JTX5"/>
<dbReference type="STRING" id="321327.CYA_1698"/>
<dbReference type="KEGG" id="cya:CYA_1698"/>
<dbReference type="eggNOG" id="COG0158">
    <property type="taxonomic scope" value="Bacteria"/>
</dbReference>
<dbReference type="HOGENOM" id="CLU_039977_2_2_3"/>
<dbReference type="UniPathway" id="UPA00116"/>
<dbReference type="Proteomes" id="UP000008818">
    <property type="component" value="Chromosome"/>
</dbReference>
<dbReference type="GO" id="GO:0005829">
    <property type="term" value="C:cytosol"/>
    <property type="evidence" value="ECO:0007669"/>
    <property type="project" value="TreeGrafter"/>
</dbReference>
<dbReference type="GO" id="GO:0042132">
    <property type="term" value="F:fructose 1,6-bisphosphate 1-phosphatase activity"/>
    <property type="evidence" value="ECO:0007669"/>
    <property type="project" value="UniProtKB-UniRule"/>
</dbReference>
<dbReference type="GO" id="GO:0000287">
    <property type="term" value="F:magnesium ion binding"/>
    <property type="evidence" value="ECO:0007669"/>
    <property type="project" value="UniProtKB-UniRule"/>
</dbReference>
<dbReference type="GO" id="GO:0030388">
    <property type="term" value="P:fructose 1,6-bisphosphate metabolic process"/>
    <property type="evidence" value="ECO:0007669"/>
    <property type="project" value="TreeGrafter"/>
</dbReference>
<dbReference type="GO" id="GO:0006002">
    <property type="term" value="P:fructose 6-phosphate metabolic process"/>
    <property type="evidence" value="ECO:0007669"/>
    <property type="project" value="TreeGrafter"/>
</dbReference>
<dbReference type="GO" id="GO:0006000">
    <property type="term" value="P:fructose metabolic process"/>
    <property type="evidence" value="ECO:0007669"/>
    <property type="project" value="TreeGrafter"/>
</dbReference>
<dbReference type="GO" id="GO:0006094">
    <property type="term" value="P:gluconeogenesis"/>
    <property type="evidence" value="ECO:0007669"/>
    <property type="project" value="UniProtKB-UniRule"/>
</dbReference>
<dbReference type="GO" id="GO:0019253">
    <property type="term" value="P:reductive pentose-phosphate cycle"/>
    <property type="evidence" value="ECO:0007669"/>
    <property type="project" value="UniProtKB-UniRule"/>
</dbReference>
<dbReference type="GO" id="GO:0005986">
    <property type="term" value="P:sucrose biosynthetic process"/>
    <property type="evidence" value="ECO:0007669"/>
    <property type="project" value="TreeGrafter"/>
</dbReference>
<dbReference type="CDD" id="cd00354">
    <property type="entry name" value="FBPase"/>
    <property type="match status" value="1"/>
</dbReference>
<dbReference type="FunFam" id="3.30.540.10:FF:000002">
    <property type="entry name" value="Fructose-1,6-bisphosphatase class 1"/>
    <property type="match status" value="1"/>
</dbReference>
<dbReference type="FunFam" id="3.40.190.80:FF:000001">
    <property type="entry name" value="Fructose-1,6-bisphosphatase class 1"/>
    <property type="match status" value="1"/>
</dbReference>
<dbReference type="Gene3D" id="3.40.190.80">
    <property type="match status" value="1"/>
</dbReference>
<dbReference type="Gene3D" id="3.30.540.10">
    <property type="entry name" value="Fructose-1,6-Bisphosphatase, subunit A, domain 1"/>
    <property type="match status" value="1"/>
</dbReference>
<dbReference type="HAMAP" id="MF_01855">
    <property type="entry name" value="FBPase_class1"/>
    <property type="match status" value="1"/>
</dbReference>
<dbReference type="InterPro" id="IPR044015">
    <property type="entry name" value="FBPase_C_dom"/>
</dbReference>
<dbReference type="InterPro" id="IPR000146">
    <property type="entry name" value="FBPase_class-1"/>
</dbReference>
<dbReference type="InterPro" id="IPR033391">
    <property type="entry name" value="FBPase_N"/>
</dbReference>
<dbReference type="InterPro" id="IPR028343">
    <property type="entry name" value="FBPtase"/>
</dbReference>
<dbReference type="NCBIfam" id="NF006778">
    <property type="entry name" value="PRK09293.1-1"/>
    <property type="match status" value="1"/>
</dbReference>
<dbReference type="PANTHER" id="PTHR11556">
    <property type="entry name" value="FRUCTOSE-1,6-BISPHOSPHATASE-RELATED"/>
    <property type="match status" value="1"/>
</dbReference>
<dbReference type="PANTHER" id="PTHR11556:SF35">
    <property type="entry name" value="SEDOHEPTULOSE-1,7-BISPHOSPHATASE, CHLOROPLASTIC"/>
    <property type="match status" value="1"/>
</dbReference>
<dbReference type="Pfam" id="PF00316">
    <property type="entry name" value="FBPase"/>
    <property type="match status" value="1"/>
</dbReference>
<dbReference type="Pfam" id="PF18913">
    <property type="entry name" value="FBPase_C"/>
    <property type="match status" value="1"/>
</dbReference>
<dbReference type="PIRSF" id="PIRSF500210">
    <property type="entry name" value="FBPtase"/>
    <property type="match status" value="1"/>
</dbReference>
<dbReference type="PIRSF" id="PIRSF000904">
    <property type="entry name" value="FBPtase_SBPase"/>
    <property type="match status" value="1"/>
</dbReference>
<dbReference type="PRINTS" id="PR00115">
    <property type="entry name" value="F16BPHPHTASE"/>
</dbReference>
<dbReference type="SUPFAM" id="SSF56655">
    <property type="entry name" value="Carbohydrate phosphatase"/>
    <property type="match status" value="1"/>
</dbReference>
<name>F16PA_SYNJA</name>
<keyword id="KW-0113">Calvin cycle</keyword>
<keyword id="KW-0119">Carbohydrate metabolism</keyword>
<keyword id="KW-0963">Cytoplasm</keyword>
<keyword id="KW-0378">Hydrolase</keyword>
<keyword id="KW-0460">Magnesium</keyword>
<keyword id="KW-0479">Metal-binding</keyword>
<organism>
    <name type="scientific">Synechococcus sp. (strain JA-3-3Ab)</name>
    <name type="common">Cyanobacteria bacterium Yellowstone A-Prime</name>
    <dbReference type="NCBI Taxonomy" id="321327"/>
    <lineage>
        <taxon>Bacteria</taxon>
        <taxon>Bacillati</taxon>
        <taxon>Cyanobacteriota</taxon>
        <taxon>Cyanophyceae</taxon>
        <taxon>Synechococcales</taxon>
        <taxon>Synechococcaceae</taxon>
        <taxon>Synechococcus</taxon>
    </lineage>
</organism>
<feature type="chain" id="PRO_0000364731" description="Fructose-1,6-bisphosphatase class 1">
    <location>
        <begin position="1"/>
        <end position="332"/>
    </location>
</feature>
<feature type="binding site" evidence="1">
    <location>
        <position position="94"/>
    </location>
    <ligand>
        <name>Mg(2+)</name>
        <dbReference type="ChEBI" id="CHEBI:18420"/>
        <label>1</label>
    </ligand>
</feature>
<feature type="binding site" evidence="1">
    <location>
        <position position="116"/>
    </location>
    <ligand>
        <name>Mg(2+)</name>
        <dbReference type="ChEBI" id="CHEBI:18420"/>
        <label>1</label>
    </ligand>
</feature>
<feature type="binding site" evidence="1">
    <location>
        <position position="116"/>
    </location>
    <ligand>
        <name>Mg(2+)</name>
        <dbReference type="ChEBI" id="CHEBI:18420"/>
        <label>2</label>
    </ligand>
</feature>
<feature type="binding site" evidence="1">
    <location>
        <position position="118"/>
    </location>
    <ligand>
        <name>Mg(2+)</name>
        <dbReference type="ChEBI" id="CHEBI:18420"/>
        <label>1</label>
    </ligand>
</feature>
<feature type="binding site" evidence="1">
    <location>
        <begin position="119"/>
        <end position="122"/>
    </location>
    <ligand>
        <name>substrate</name>
    </ligand>
</feature>
<feature type="binding site" evidence="1">
    <location>
        <position position="119"/>
    </location>
    <ligand>
        <name>Mg(2+)</name>
        <dbReference type="ChEBI" id="CHEBI:18420"/>
        <label>2</label>
    </ligand>
</feature>
<feature type="binding site" evidence="1">
    <location>
        <position position="211"/>
    </location>
    <ligand>
        <name>substrate</name>
    </ligand>
</feature>
<feature type="binding site" evidence="1">
    <location>
        <position position="239"/>
    </location>
    <ligand>
        <name>substrate</name>
    </ligand>
</feature>
<feature type="binding site" evidence="1">
    <location>
        <begin position="257"/>
        <end position="259"/>
    </location>
    <ligand>
        <name>substrate</name>
    </ligand>
</feature>
<feature type="binding site" evidence="1">
    <location>
        <position position="269"/>
    </location>
    <ligand>
        <name>substrate</name>
    </ligand>
</feature>
<feature type="binding site" evidence="1">
    <location>
        <position position="275"/>
    </location>
    <ligand>
        <name>Mg(2+)</name>
        <dbReference type="ChEBI" id="CHEBI:18420"/>
        <label>2</label>
    </ligand>
</feature>
<protein>
    <recommendedName>
        <fullName evidence="1">Fructose-1,6-bisphosphatase class 1</fullName>
        <shortName evidence="1">FBPase class 1</shortName>
        <ecNumber evidence="1">3.1.3.11</ecNumber>
    </recommendedName>
    <alternativeName>
        <fullName evidence="1">D-fructose-1,6-bisphosphate 1-phosphohydrolase class 1</fullName>
    </alternativeName>
</protein>
<proteinExistence type="inferred from homology"/>
<evidence type="ECO:0000255" key="1">
    <source>
        <dbReference type="HAMAP-Rule" id="MF_01855"/>
    </source>
</evidence>
<accession>Q2JTX5</accession>
<reference key="1">
    <citation type="journal article" date="2007" name="ISME J.">
        <title>Population level functional diversity in a microbial community revealed by comparative genomic and metagenomic analyses.</title>
        <authorList>
            <person name="Bhaya D."/>
            <person name="Grossman A.R."/>
            <person name="Steunou A.-S."/>
            <person name="Khuri N."/>
            <person name="Cohan F.M."/>
            <person name="Hamamura N."/>
            <person name="Melendrez M.C."/>
            <person name="Bateson M.M."/>
            <person name="Ward D.M."/>
            <person name="Heidelberg J.F."/>
        </authorList>
    </citation>
    <scope>NUCLEOTIDE SEQUENCE [LARGE SCALE GENOMIC DNA]</scope>
    <source>
        <strain>JA-3-3Ab</strain>
    </source>
</reference>